<accession>Q7V8D2</accession>
<comment type="function">
    <text evidence="1">Catalyzes the attachment of threonine to tRNA(Thr) in a two-step reaction: L-threonine is first activated by ATP to form Thr-AMP and then transferred to the acceptor end of tRNA(Thr). Also edits incorrectly charged L-seryl-tRNA(Thr).</text>
</comment>
<comment type="catalytic activity">
    <reaction evidence="1">
        <text>tRNA(Thr) + L-threonine + ATP = L-threonyl-tRNA(Thr) + AMP + diphosphate + H(+)</text>
        <dbReference type="Rhea" id="RHEA:24624"/>
        <dbReference type="Rhea" id="RHEA-COMP:9670"/>
        <dbReference type="Rhea" id="RHEA-COMP:9704"/>
        <dbReference type="ChEBI" id="CHEBI:15378"/>
        <dbReference type="ChEBI" id="CHEBI:30616"/>
        <dbReference type="ChEBI" id="CHEBI:33019"/>
        <dbReference type="ChEBI" id="CHEBI:57926"/>
        <dbReference type="ChEBI" id="CHEBI:78442"/>
        <dbReference type="ChEBI" id="CHEBI:78534"/>
        <dbReference type="ChEBI" id="CHEBI:456215"/>
        <dbReference type="EC" id="6.1.1.3"/>
    </reaction>
</comment>
<comment type="cofactor">
    <cofactor evidence="1">
        <name>Zn(2+)</name>
        <dbReference type="ChEBI" id="CHEBI:29105"/>
    </cofactor>
    <text evidence="1">Binds 1 zinc ion per subunit.</text>
</comment>
<comment type="subunit">
    <text evidence="1">Homodimer.</text>
</comment>
<comment type="subcellular location">
    <subcellularLocation>
        <location evidence="1">Cytoplasm</location>
    </subcellularLocation>
</comment>
<comment type="similarity">
    <text evidence="1">Belongs to the class-II aminoacyl-tRNA synthetase family.</text>
</comment>
<sequence length="640" mass="73271">MPIIALPDGNKKKFDQPVTIMEVAESLGPGLAKAAIAGRVNGVLLDTCIPIEKDSEVNIITAKDQDGIETIRHSFAHLIGHAVKQLYPEAKMAIGPVIEDGFYYDIAYDHPFTPKDLEAIEARMKELVKLDYDVNVEIVSKEEARKEFEKRCEPYKIEIVDEIPENEIIKLYRHQEYTDMCRGPHVPNTRHLRTFKLMKVSGAYWRGDSNKTMLQRIYGTAWGSSKELKAYLKRLEEAEKRDHRRIAKQMSLFHTQEEAPGMIFWHAKGWAIYQVLEQYIRETLSLHDYQEIRTPQVVDRSLWEKSGHWEKFKDDMFTTTSENREYAIKPMNCPCHVQIFNQGLKSYRDLPIRLAEFGSCLRNEPSGSLHGLMRVRNFVQDDAHIFCTELQVQEEVSKFIDLVFEVYRSFGFDSVLIKLSTRPEKRVGSDEIWDKSEKALSDALDAKGLAWDLLPGEGAFYGPKIEFSLKDCLGRVWQCGTIQVDFSMPERLGASYVAEDSQRRTPVMLHRAILGSFERFIGILIEHYAGRLPIWLAPVQVVVMGITDRNAQACQDICKKLSALEYRTEVDLRNEKIGFKVREHTLQRVPFLIIIGDKEQQSGEVAVRTREGKDFGSMPLKGFTSLLDEAIALKGRSGVS</sequence>
<organism>
    <name type="scientific">Prochlorococcus marinus (strain MIT 9313)</name>
    <dbReference type="NCBI Taxonomy" id="74547"/>
    <lineage>
        <taxon>Bacteria</taxon>
        <taxon>Bacillati</taxon>
        <taxon>Cyanobacteriota</taxon>
        <taxon>Cyanophyceae</taxon>
        <taxon>Synechococcales</taxon>
        <taxon>Prochlorococcaceae</taxon>
        <taxon>Prochlorococcus</taxon>
    </lineage>
</organism>
<reference key="1">
    <citation type="journal article" date="2003" name="Nature">
        <title>Genome divergence in two Prochlorococcus ecotypes reflects oceanic niche differentiation.</title>
        <authorList>
            <person name="Rocap G."/>
            <person name="Larimer F.W."/>
            <person name="Lamerdin J.E."/>
            <person name="Malfatti S."/>
            <person name="Chain P."/>
            <person name="Ahlgren N.A."/>
            <person name="Arellano A."/>
            <person name="Coleman M."/>
            <person name="Hauser L."/>
            <person name="Hess W.R."/>
            <person name="Johnson Z.I."/>
            <person name="Land M.L."/>
            <person name="Lindell D."/>
            <person name="Post A.F."/>
            <person name="Regala W."/>
            <person name="Shah M."/>
            <person name="Shaw S.L."/>
            <person name="Steglich C."/>
            <person name="Sullivan M.B."/>
            <person name="Ting C.S."/>
            <person name="Tolonen A."/>
            <person name="Webb E.A."/>
            <person name="Zinser E.R."/>
            <person name="Chisholm S.W."/>
        </authorList>
    </citation>
    <scope>NUCLEOTIDE SEQUENCE [LARGE SCALE GENOMIC DNA]</scope>
    <source>
        <strain>MIT 9313</strain>
    </source>
</reference>
<evidence type="ECO:0000255" key="1">
    <source>
        <dbReference type="HAMAP-Rule" id="MF_00184"/>
    </source>
</evidence>
<evidence type="ECO:0000255" key="2">
    <source>
        <dbReference type="PROSITE-ProRule" id="PRU01228"/>
    </source>
</evidence>
<proteinExistence type="inferred from homology"/>
<name>SYT_PROMM</name>
<gene>
    <name evidence="1" type="primary">thrS</name>
    <name type="ordered locus">PMT_0424</name>
</gene>
<feature type="chain" id="PRO_0000101025" description="Threonine--tRNA ligase">
    <location>
        <begin position="1"/>
        <end position="640"/>
    </location>
</feature>
<feature type="domain" description="TGS" evidence="2">
    <location>
        <begin position="1"/>
        <end position="61"/>
    </location>
</feature>
<feature type="region of interest" description="Catalytic" evidence="1">
    <location>
        <begin position="242"/>
        <end position="533"/>
    </location>
</feature>
<feature type="binding site" evidence="1">
    <location>
        <position position="333"/>
    </location>
    <ligand>
        <name>Zn(2+)</name>
        <dbReference type="ChEBI" id="CHEBI:29105"/>
    </ligand>
</feature>
<feature type="binding site" evidence="1">
    <location>
        <position position="384"/>
    </location>
    <ligand>
        <name>Zn(2+)</name>
        <dbReference type="ChEBI" id="CHEBI:29105"/>
    </ligand>
</feature>
<feature type="binding site" evidence="1">
    <location>
        <position position="510"/>
    </location>
    <ligand>
        <name>Zn(2+)</name>
        <dbReference type="ChEBI" id="CHEBI:29105"/>
    </ligand>
</feature>
<dbReference type="EC" id="6.1.1.3" evidence="1"/>
<dbReference type="EMBL" id="BX548175">
    <property type="protein sequence ID" value="CAE20599.1"/>
    <property type="molecule type" value="Genomic_DNA"/>
</dbReference>
<dbReference type="RefSeq" id="WP_011129803.1">
    <property type="nucleotide sequence ID" value="NC_005071.1"/>
</dbReference>
<dbReference type="SMR" id="Q7V8D2"/>
<dbReference type="KEGG" id="pmt:PMT_0424"/>
<dbReference type="eggNOG" id="COG0441">
    <property type="taxonomic scope" value="Bacteria"/>
</dbReference>
<dbReference type="HOGENOM" id="CLU_008554_0_1_3"/>
<dbReference type="OrthoDB" id="9802304at2"/>
<dbReference type="Proteomes" id="UP000001423">
    <property type="component" value="Chromosome"/>
</dbReference>
<dbReference type="GO" id="GO:0005829">
    <property type="term" value="C:cytosol"/>
    <property type="evidence" value="ECO:0007669"/>
    <property type="project" value="TreeGrafter"/>
</dbReference>
<dbReference type="GO" id="GO:0005524">
    <property type="term" value="F:ATP binding"/>
    <property type="evidence" value="ECO:0007669"/>
    <property type="project" value="UniProtKB-UniRule"/>
</dbReference>
<dbReference type="GO" id="GO:0046872">
    <property type="term" value="F:metal ion binding"/>
    <property type="evidence" value="ECO:0007669"/>
    <property type="project" value="UniProtKB-KW"/>
</dbReference>
<dbReference type="GO" id="GO:0004829">
    <property type="term" value="F:threonine-tRNA ligase activity"/>
    <property type="evidence" value="ECO:0007669"/>
    <property type="project" value="UniProtKB-UniRule"/>
</dbReference>
<dbReference type="GO" id="GO:0000049">
    <property type="term" value="F:tRNA binding"/>
    <property type="evidence" value="ECO:0007669"/>
    <property type="project" value="UniProtKB-KW"/>
</dbReference>
<dbReference type="GO" id="GO:0006435">
    <property type="term" value="P:threonyl-tRNA aminoacylation"/>
    <property type="evidence" value="ECO:0007669"/>
    <property type="project" value="UniProtKB-UniRule"/>
</dbReference>
<dbReference type="CDD" id="cd01667">
    <property type="entry name" value="TGS_ThrRS"/>
    <property type="match status" value="1"/>
</dbReference>
<dbReference type="CDD" id="cd00860">
    <property type="entry name" value="ThrRS_anticodon"/>
    <property type="match status" value="1"/>
</dbReference>
<dbReference type="CDD" id="cd00771">
    <property type="entry name" value="ThrRS_core"/>
    <property type="match status" value="1"/>
</dbReference>
<dbReference type="FunFam" id="3.10.20.30:FF:000005">
    <property type="entry name" value="Threonine--tRNA ligase"/>
    <property type="match status" value="1"/>
</dbReference>
<dbReference type="FunFam" id="3.30.54.20:FF:000002">
    <property type="entry name" value="Threonine--tRNA ligase"/>
    <property type="match status" value="1"/>
</dbReference>
<dbReference type="FunFam" id="3.30.930.10:FF:000002">
    <property type="entry name" value="Threonine--tRNA ligase"/>
    <property type="match status" value="1"/>
</dbReference>
<dbReference type="FunFam" id="3.40.50.800:FF:000001">
    <property type="entry name" value="Threonine--tRNA ligase"/>
    <property type="match status" value="1"/>
</dbReference>
<dbReference type="FunFam" id="3.30.980.10:FF:000005">
    <property type="entry name" value="Threonyl-tRNA synthetase, mitochondrial"/>
    <property type="match status" value="1"/>
</dbReference>
<dbReference type="Gene3D" id="3.10.20.30">
    <property type="match status" value="1"/>
</dbReference>
<dbReference type="Gene3D" id="3.30.54.20">
    <property type="match status" value="1"/>
</dbReference>
<dbReference type="Gene3D" id="3.40.50.800">
    <property type="entry name" value="Anticodon-binding domain"/>
    <property type="match status" value="1"/>
</dbReference>
<dbReference type="Gene3D" id="3.30.930.10">
    <property type="entry name" value="Bira Bifunctional Protein, Domain 2"/>
    <property type="match status" value="1"/>
</dbReference>
<dbReference type="Gene3D" id="3.30.980.10">
    <property type="entry name" value="Threonyl-trna Synthetase, Chain A, domain 2"/>
    <property type="match status" value="1"/>
</dbReference>
<dbReference type="HAMAP" id="MF_00184">
    <property type="entry name" value="Thr_tRNA_synth"/>
    <property type="match status" value="1"/>
</dbReference>
<dbReference type="InterPro" id="IPR002314">
    <property type="entry name" value="aa-tRNA-synt_IIb"/>
</dbReference>
<dbReference type="InterPro" id="IPR006195">
    <property type="entry name" value="aa-tRNA-synth_II"/>
</dbReference>
<dbReference type="InterPro" id="IPR045864">
    <property type="entry name" value="aa-tRNA-synth_II/BPL/LPL"/>
</dbReference>
<dbReference type="InterPro" id="IPR004154">
    <property type="entry name" value="Anticodon-bd"/>
</dbReference>
<dbReference type="InterPro" id="IPR036621">
    <property type="entry name" value="Anticodon-bd_dom_sf"/>
</dbReference>
<dbReference type="InterPro" id="IPR012675">
    <property type="entry name" value="Beta-grasp_dom_sf"/>
</dbReference>
<dbReference type="InterPro" id="IPR004095">
    <property type="entry name" value="TGS"/>
</dbReference>
<dbReference type="InterPro" id="IPR012676">
    <property type="entry name" value="TGS-like"/>
</dbReference>
<dbReference type="InterPro" id="IPR002320">
    <property type="entry name" value="Thr-tRNA-ligase_IIa"/>
</dbReference>
<dbReference type="InterPro" id="IPR018163">
    <property type="entry name" value="Thr/Ala-tRNA-synth_IIc_edit"/>
</dbReference>
<dbReference type="InterPro" id="IPR047246">
    <property type="entry name" value="ThrRS_anticodon"/>
</dbReference>
<dbReference type="InterPro" id="IPR033728">
    <property type="entry name" value="ThrRS_core"/>
</dbReference>
<dbReference type="InterPro" id="IPR012947">
    <property type="entry name" value="tRNA_SAD"/>
</dbReference>
<dbReference type="NCBIfam" id="TIGR00418">
    <property type="entry name" value="thrS"/>
    <property type="match status" value="1"/>
</dbReference>
<dbReference type="PANTHER" id="PTHR11451:SF44">
    <property type="entry name" value="THREONINE--TRNA LIGASE, CHLOROPLASTIC_MITOCHONDRIAL 2"/>
    <property type="match status" value="1"/>
</dbReference>
<dbReference type="PANTHER" id="PTHR11451">
    <property type="entry name" value="THREONINE-TRNA LIGASE"/>
    <property type="match status" value="1"/>
</dbReference>
<dbReference type="Pfam" id="PF03129">
    <property type="entry name" value="HGTP_anticodon"/>
    <property type="match status" value="1"/>
</dbReference>
<dbReference type="Pfam" id="PF02824">
    <property type="entry name" value="TGS"/>
    <property type="match status" value="1"/>
</dbReference>
<dbReference type="Pfam" id="PF00587">
    <property type="entry name" value="tRNA-synt_2b"/>
    <property type="match status" value="1"/>
</dbReference>
<dbReference type="Pfam" id="PF07973">
    <property type="entry name" value="tRNA_SAD"/>
    <property type="match status" value="1"/>
</dbReference>
<dbReference type="PRINTS" id="PR01047">
    <property type="entry name" value="TRNASYNTHTHR"/>
</dbReference>
<dbReference type="SMART" id="SM00863">
    <property type="entry name" value="tRNA_SAD"/>
    <property type="match status" value="1"/>
</dbReference>
<dbReference type="SUPFAM" id="SSF52954">
    <property type="entry name" value="Class II aaRS ABD-related"/>
    <property type="match status" value="1"/>
</dbReference>
<dbReference type="SUPFAM" id="SSF55681">
    <property type="entry name" value="Class II aaRS and biotin synthetases"/>
    <property type="match status" value="1"/>
</dbReference>
<dbReference type="SUPFAM" id="SSF81271">
    <property type="entry name" value="TGS-like"/>
    <property type="match status" value="1"/>
</dbReference>
<dbReference type="SUPFAM" id="SSF55186">
    <property type="entry name" value="ThrRS/AlaRS common domain"/>
    <property type="match status" value="1"/>
</dbReference>
<dbReference type="PROSITE" id="PS50862">
    <property type="entry name" value="AA_TRNA_LIGASE_II"/>
    <property type="match status" value="1"/>
</dbReference>
<dbReference type="PROSITE" id="PS51880">
    <property type="entry name" value="TGS"/>
    <property type="match status" value="1"/>
</dbReference>
<protein>
    <recommendedName>
        <fullName evidence="1">Threonine--tRNA ligase</fullName>
        <ecNumber evidence="1">6.1.1.3</ecNumber>
    </recommendedName>
    <alternativeName>
        <fullName evidence="1">Threonyl-tRNA synthetase</fullName>
        <shortName evidence="1">ThrRS</shortName>
    </alternativeName>
</protein>
<keyword id="KW-0030">Aminoacyl-tRNA synthetase</keyword>
<keyword id="KW-0067">ATP-binding</keyword>
<keyword id="KW-0963">Cytoplasm</keyword>
<keyword id="KW-0436">Ligase</keyword>
<keyword id="KW-0479">Metal-binding</keyword>
<keyword id="KW-0547">Nucleotide-binding</keyword>
<keyword id="KW-0648">Protein biosynthesis</keyword>
<keyword id="KW-1185">Reference proteome</keyword>
<keyword id="KW-0694">RNA-binding</keyword>
<keyword id="KW-0820">tRNA-binding</keyword>
<keyword id="KW-0862">Zinc</keyword>